<reference key="1">
    <citation type="submission" date="2005-09" db="EMBL/GenBank/DDBJ databases">
        <authorList>
            <person name="Glass J.I."/>
            <person name="Lartigue C."/>
            <person name="Pfannkoch C."/>
            <person name="Baden-Tillson H."/>
            <person name="Smith H.O."/>
            <person name="Venter J.C."/>
            <person name="Roske K."/>
            <person name="Wise K.S."/>
            <person name="Calcutt M.J."/>
            <person name="Nelson W.C."/>
            <person name="Nierman W.C."/>
        </authorList>
    </citation>
    <scope>NUCLEOTIDE SEQUENCE [LARGE SCALE GENOMIC DNA]</scope>
    <source>
        <strain>California kid / ATCC 27343 / NCTC 10154</strain>
    </source>
</reference>
<gene>
    <name evidence="1" type="primary">rpoC</name>
    <name type="ordered locus">MCAP_0071</name>
</gene>
<organism>
    <name type="scientific">Mycoplasma capricolum subsp. capricolum (strain California kid / ATCC 27343 / NCTC 10154)</name>
    <dbReference type="NCBI Taxonomy" id="340047"/>
    <lineage>
        <taxon>Bacteria</taxon>
        <taxon>Bacillati</taxon>
        <taxon>Mycoplasmatota</taxon>
        <taxon>Mollicutes</taxon>
        <taxon>Mycoplasmataceae</taxon>
        <taxon>Mycoplasma</taxon>
    </lineage>
</organism>
<comment type="function">
    <text evidence="1">DNA-dependent RNA polymerase catalyzes the transcription of DNA into RNA using the four ribonucleoside triphosphates as substrates.</text>
</comment>
<comment type="catalytic activity">
    <reaction evidence="1">
        <text>RNA(n) + a ribonucleoside 5'-triphosphate = RNA(n+1) + diphosphate</text>
        <dbReference type="Rhea" id="RHEA:21248"/>
        <dbReference type="Rhea" id="RHEA-COMP:14527"/>
        <dbReference type="Rhea" id="RHEA-COMP:17342"/>
        <dbReference type="ChEBI" id="CHEBI:33019"/>
        <dbReference type="ChEBI" id="CHEBI:61557"/>
        <dbReference type="ChEBI" id="CHEBI:140395"/>
        <dbReference type="EC" id="2.7.7.6"/>
    </reaction>
</comment>
<comment type="cofactor">
    <cofactor evidence="1">
        <name>Mg(2+)</name>
        <dbReference type="ChEBI" id="CHEBI:18420"/>
    </cofactor>
    <text evidence="1">Binds 1 Mg(2+) ion per subunit.</text>
</comment>
<comment type="cofactor">
    <cofactor evidence="1">
        <name>Zn(2+)</name>
        <dbReference type="ChEBI" id="CHEBI:29105"/>
    </cofactor>
    <text evidence="1">Binds 2 Zn(2+) ions per subunit.</text>
</comment>
<comment type="subunit">
    <text evidence="1">The RNAP catalytic core consists of 2 alpha, 1 beta, 1 beta' and 1 omega subunit. When a sigma factor is associated with the core the holoenzyme is formed, which can initiate transcription.</text>
</comment>
<comment type="similarity">
    <text evidence="1">Belongs to the RNA polymerase beta' chain family.</text>
</comment>
<sequence>MENLNRKKAIKIELANPDTIRSWSHGEVLKPETINYKTLKAEKDGLFDERIFGPTKNYECVCGRYKKANPMNKGKKCEKCGVELTESIVRRERMGHIELEEPVTHIWMLKVAPYRIAAILDLKAKELEEVVYFVSHIVLEQGNQSHFLEKEVLDLGSSRITKTREKLQLSILDVIDQINDPEHRDTKKANRLLEELKNTSIPFSIDEATSLISKYTNAKFGIGARAVEYLLEKVDLTKEIEAIKIQLENSKKTPNERTKLLKRLETFDSLKRSKQRPEWMVMRVIPVIPPDIRPIIQLDGGRFTTSEINDLYRRIIIRNERLKKVKEMGAPSIIVNNEKRMLQEAVDALFDNERKPKPVQGKNKRPLKSLTSVLKGKQGRFRQNLLGKRVDYSARSVIAIGPDLKMYQAGLPREMAITLFKPFVIQWLQDHEYAENVKIAEKMLLQNDPKVWEALEQVIKDRPVLLNRAPTLHRLGIQAFEPKLVKGKAIRLHPLVTTAFNADFDGDQMAVHVPITKEAVAESRALMLGSSAILGPKDGKAIVTPGQDIILGNYYLTTEEKNAKGQGMIFSSLDEAFMAYNSGQIHLNSLIGIALSALPEEKFSDKNQRLNSYLLTTVGKLYFNQIFDDNFPWINSNNIWNAKEAVKEFIYDFSQDIDKVIENVQVQQPIKKKELSLIIERYFETHGARKTAEMLDKMKDLGFSFSTKSGTTISAGDVVAFTHKYDEFKEADQKVEQITDFYNMGMLTNSEKKRRIIDVWSEVKDKIQNELATVLRKDVKNPIFVMVDSGARGNVSNFTQLVGMRGLMNDTKGDIKEIPIKSSFREGLTVSEYFVSTHGARKGMADIALKTADSGYLTRRLVDVSQEIVVVNEDCEPTKGFEVSAIIDTKHDNVIVPLKDRLVGRFTFEDIYDDDKNLVASANTLIDKNIAEKIIMSGISSVIIRSVLTCDNKRGVCQKCYGLNLATASVVNIGEPVGVIAAQSIGEPGTQLTMRNFHTGGVAGNVDITQGLPRIKELLDVTTPKGAVAIISEVDGVVSEIEDYNGVFVINIVTENEEVKKYKTEFNSVLRVEQGSSVMAGQKLTEGAIDLHQLLEFGGIQDVQNYILKEVQKVYRLQGIEISDKYIEIIIKQMLNKVKITDSGDSDLLPGEIITIQNYKEVVQDCIVKSIRPPLSKAQIFGIKKAPLESSSWLSSASFQDTARVLTRAIIKGKEDKLEGLKENIMLGNLIPAGTGLTGTQEVEQLAEQYHNNEY</sequence>
<proteinExistence type="inferred from homology"/>
<feature type="chain" id="PRO_0000240809" description="DNA-directed RNA polymerase subunit beta'">
    <location>
        <begin position="1"/>
        <end position="1255"/>
    </location>
</feature>
<feature type="binding site" evidence="1">
    <location>
        <position position="60"/>
    </location>
    <ligand>
        <name>Zn(2+)</name>
        <dbReference type="ChEBI" id="CHEBI:29105"/>
        <label>1</label>
    </ligand>
</feature>
<feature type="binding site" evidence="1">
    <location>
        <position position="62"/>
    </location>
    <ligand>
        <name>Zn(2+)</name>
        <dbReference type="ChEBI" id="CHEBI:29105"/>
        <label>1</label>
    </ligand>
</feature>
<feature type="binding site" evidence="1">
    <location>
        <position position="77"/>
    </location>
    <ligand>
        <name>Zn(2+)</name>
        <dbReference type="ChEBI" id="CHEBI:29105"/>
        <label>1</label>
    </ligand>
</feature>
<feature type="binding site" evidence="1">
    <location>
        <position position="80"/>
    </location>
    <ligand>
        <name>Zn(2+)</name>
        <dbReference type="ChEBI" id="CHEBI:29105"/>
        <label>1</label>
    </ligand>
</feature>
<feature type="binding site" evidence="1">
    <location>
        <position position="503"/>
    </location>
    <ligand>
        <name>Mg(2+)</name>
        <dbReference type="ChEBI" id="CHEBI:18420"/>
    </ligand>
</feature>
<feature type="binding site" evidence="1">
    <location>
        <position position="505"/>
    </location>
    <ligand>
        <name>Mg(2+)</name>
        <dbReference type="ChEBI" id="CHEBI:18420"/>
    </ligand>
</feature>
<feature type="binding site" evidence="1">
    <location>
        <position position="507"/>
    </location>
    <ligand>
        <name>Mg(2+)</name>
        <dbReference type="ChEBI" id="CHEBI:18420"/>
    </ligand>
</feature>
<feature type="binding site" evidence="1">
    <location>
        <position position="875"/>
    </location>
    <ligand>
        <name>Zn(2+)</name>
        <dbReference type="ChEBI" id="CHEBI:29105"/>
        <label>2</label>
    </ligand>
</feature>
<feature type="binding site" evidence="1">
    <location>
        <position position="950"/>
    </location>
    <ligand>
        <name>Zn(2+)</name>
        <dbReference type="ChEBI" id="CHEBI:29105"/>
        <label>2</label>
    </ligand>
</feature>
<feature type="binding site" evidence="1">
    <location>
        <position position="957"/>
    </location>
    <ligand>
        <name>Zn(2+)</name>
        <dbReference type="ChEBI" id="CHEBI:29105"/>
        <label>2</label>
    </ligand>
</feature>
<feature type="binding site" evidence="1">
    <location>
        <position position="960"/>
    </location>
    <ligand>
        <name>Zn(2+)</name>
        <dbReference type="ChEBI" id="CHEBI:29105"/>
        <label>2</label>
    </ligand>
</feature>
<dbReference type="EC" id="2.7.7.6" evidence="1"/>
<dbReference type="EMBL" id="CP000123">
    <property type="protein sequence ID" value="ABC01241.1"/>
    <property type="molecule type" value="Genomic_DNA"/>
</dbReference>
<dbReference type="RefSeq" id="WP_011386971.1">
    <property type="nucleotide sequence ID" value="NC_007633.1"/>
</dbReference>
<dbReference type="SMR" id="Q2ST47"/>
<dbReference type="GeneID" id="23778974"/>
<dbReference type="KEGG" id="mcp:MCAP_0071"/>
<dbReference type="HOGENOM" id="CLU_000524_3_1_14"/>
<dbReference type="PhylomeDB" id="Q2ST47"/>
<dbReference type="Proteomes" id="UP000001928">
    <property type="component" value="Chromosome"/>
</dbReference>
<dbReference type="GO" id="GO:0000428">
    <property type="term" value="C:DNA-directed RNA polymerase complex"/>
    <property type="evidence" value="ECO:0007669"/>
    <property type="project" value="UniProtKB-KW"/>
</dbReference>
<dbReference type="GO" id="GO:0003677">
    <property type="term" value="F:DNA binding"/>
    <property type="evidence" value="ECO:0007669"/>
    <property type="project" value="UniProtKB-UniRule"/>
</dbReference>
<dbReference type="GO" id="GO:0003899">
    <property type="term" value="F:DNA-directed RNA polymerase activity"/>
    <property type="evidence" value="ECO:0007669"/>
    <property type="project" value="UniProtKB-UniRule"/>
</dbReference>
<dbReference type="GO" id="GO:0000287">
    <property type="term" value="F:magnesium ion binding"/>
    <property type="evidence" value="ECO:0007669"/>
    <property type="project" value="UniProtKB-UniRule"/>
</dbReference>
<dbReference type="GO" id="GO:0008270">
    <property type="term" value="F:zinc ion binding"/>
    <property type="evidence" value="ECO:0007669"/>
    <property type="project" value="UniProtKB-UniRule"/>
</dbReference>
<dbReference type="GO" id="GO:0006351">
    <property type="term" value="P:DNA-templated transcription"/>
    <property type="evidence" value="ECO:0007669"/>
    <property type="project" value="UniProtKB-UniRule"/>
</dbReference>
<dbReference type="CDD" id="cd02655">
    <property type="entry name" value="RNAP_beta'_C"/>
    <property type="match status" value="1"/>
</dbReference>
<dbReference type="CDD" id="cd01609">
    <property type="entry name" value="RNAP_beta'_N"/>
    <property type="match status" value="1"/>
</dbReference>
<dbReference type="Gene3D" id="1.10.132.30">
    <property type="match status" value="1"/>
</dbReference>
<dbReference type="Gene3D" id="1.10.150.390">
    <property type="match status" value="1"/>
</dbReference>
<dbReference type="Gene3D" id="1.10.1790.20">
    <property type="match status" value="1"/>
</dbReference>
<dbReference type="Gene3D" id="1.10.40.90">
    <property type="match status" value="1"/>
</dbReference>
<dbReference type="Gene3D" id="2.40.40.20">
    <property type="match status" value="1"/>
</dbReference>
<dbReference type="Gene3D" id="2.40.50.100">
    <property type="match status" value="1"/>
</dbReference>
<dbReference type="Gene3D" id="4.10.860.120">
    <property type="entry name" value="RNA polymerase II, clamp domain"/>
    <property type="match status" value="1"/>
</dbReference>
<dbReference type="Gene3D" id="1.10.274.100">
    <property type="entry name" value="RNA polymerase Rpb1, domain 3"/>
    <property type="match status" value="1"/>
</dbReference>
<dbReference type="HAMAP" id="MF_01322">
    <property type="entry name" value="RNApol_bact_RpoC"/>
    <property type="match status" value="1"/>
</dbReference>
<dbReference type="InterPro" id="IPR045867">
    <property type="entry name" value="DNA-dir_RpoC_beta_prime"/>
</dbReference>
<dbReference type="InterPro" id="IPR012754">
    <property type="entry name" value="DNA-dir_RpoC_beta_prime_bact"/>
</dbReference>
<dbReference type="InterPro" id="IPR000722">
    <property type="entry name" value="RNA_pol_asu"/>
</dbReference>
<dbReference type="InterPro" id="IPR006592">
    <property type="entry name" value="RNA_pol_N"/>
</dbReference>
<dbReference type="InterPro" id="IPR007080">
    <property type="entry name" value="RNA_pol_Rpb1_1"/>
</dbReference>
<dbReference type="InterPro" id="IPR007066">
    <property type="entry name" value="RNA_pol_Rpb1_3"/>
</dbReference>
<dbReference type="InterPro" id="IPR042102">
    <property type="entry name" value="RNA_pol_Rpb1_3_sf"/>
</dbReference>
<dbReference type="InterPro" id="IPR007083">
    <property type="entry name" value="RNA_pol_Rpb1_4"/>
</dbReference>
<dbReference type="InterPro" id="IPR007081">
    <property type="entry name" value="RNA_pol_Rpb1_5"/>
</dbReference>
<dbReference type="InterPro" id="IPR044893">
    <property type="entry name" value="RNA_pol_Rpb1_clamp_domain"/>
</dbReference>
<dbReference type="InterPro" id="IPR038120">
    <property type="entry name" value="Rpb1_funnel_sf"/>
</dbReference>
<dbReference type="NCBIfam" id="TIGR02386">
    <property type="entry name" value="rpoC_TIGR"/>
    <property type="match status" value="1"/>
</dbReference>
<dbReference type="PANTHER" id="PTHR19376">
    <property type="entry name" value="DNA-DIRECTED RNA POLYMERASE"/>
    <property type="match status" value="1"/>
</dbReference>
<dbReference type="PANTHER" id="PTHR19376:SF54">
    <property type="entry name" value="DNA-DIRECTED RNA POLYMERASE SUBUNIT BETA"/>
    <property type="match status" value="1"/>
</dbReference>
<dbReference type="Pfam" id="PF04997">
    <property type="entry name" value="RNA_pol_Rpb1_1"/>
    <property type="match status" value="1"/>
</dbReference>
<dbReference type="Pfam" id="PF00623">
    <property type="entry name" value="RNA_pol_Rpb1_2"/>
    <property type="match status" value="1"/>
</dbReference>
<dbReference type="Pfam" id="PF04983">
    <property type="entry name" value="RNA_pol_Rpb1_3"/>
    <property type="match status" value="1"/>
</dbReference>
<dbReference type="Pfam" id="PF05000">
    <property type="entry name" value="RNA_pol_Rpb1_4"/>
    <property type="match status" value="1"/>
</dbReference>
<dbReference type="Pfam" id="PF04998">
    <property type="entry name" value="RNA_pol_Rpb1_5"/>
    <property type="match status" value="1"/>
</dbReference>
<dbReference type="SMART" id="SM00663">
    <property type="entry name" value="RPOLA_N"/>
    <property type="match status" value="1"/>
</dbReference>
<dbReference type="SUPFAM" id="SSF64484">
    <property type="entry name" value="beta and beta-prime subunits of DNA dependent RNA-polymerase"/>
    <property type="match status" value="1"/>
</dbReference>
<keyword id="KW-0240">DNA-directed RNA polymerase</keyword>
<keyword id="KW-0460">Magnesium</keyword>
<keyword id="KW-0479">Metal-binding</keyword>
<keyword id="KW-0548">Nucleotidyltransferase</keyword>
<keyword id="KW-0804">Transcription</keyword>
<keyword id="KW-0808">Transferase</keyword>
<keyword id="KW-0862">Zinc</keyword>
<protein>
    <recommendedName>
        <fullName evidence="1">DNA-directed RNA polymerase subunit beta'</fullName>
        <shortName evidence="1">RNAP subunit beta'</shortName>
        <ecNumber evidence="1">2.7.7.6</ecNumber>
    </recommendedName>
    <alternativeName>
        <fullName evidence="1">RNA polymerase subunit beta'</fullName>
    </alternativeName>
    <alternativeName>
        <fullName evidence="1">Transcriptase subunit beta'</fullName>
    </alternativeName>
</protein>
<evidence type="ECO:0000255" key="1">
    <source>
        <dbReference type="HAMAP-Rule" id="MF_01322"/>
    </source>
</evidence>
<accession>Q2ST47</accession>
<name>RPOC_MYCCT</name>